<proteinExistence type="inferred from homology"/>
<comment type="function">
    <text evidence="1">Component of the class I major histocompatibility complex (MHC). Involved in the presentation of peptide antigens to the immune system (By similarity).</text>
</comment>
<comment type="subunit">
    <text evidence="1">Heterodimer of an alpha chain and a beta chain. Beta-2-microglobulin is the beta-chain of major histocompatibility complex class I molecules (By similarity).</text>
</comment>
<comment type="subcellular location">
    <subcellularLocation>
        <location evidence="1">Secreted</location>
    </subcellularLocation>
</comment>
<comment type="similarity">
    <text evidence="4">Belongs to the beta-2-microglobulin family.</text>
</comment>
<name>B2MG_ORNAN</name>
<organism>
    <name type="scientific">Ornithorhynchus anatinus</name>
    <name type="common">Duckbill platypus</name>
    <dbReference type="NCBI Taxonomy" id="9258"/>
    <lineage>
        <taxon>Eukaryota</taxon>
        <taxon>Metazoa</taxon>
        <taxon>Chordata</taxon>
        <taxon>Craniata</taxon>
        <taxon>Vertebrata</taxon>
        <taxon>Euteleostomi</taxon>
        <taxon>Mammalia</taxon>
        <taxon>Monotremata</taxon>
        <taxon>Ornithorhynchidae</taxon>
        <taxon>Ornithorhynchus</taxon>
    </lineage>
</organism>
<dbReference type="EMBL" id="AY125948">
    <property type="protein sequence ID" value="AAM98337.1"/>
    <property type="molecule type" value="mRNA"/>
</dbReference>
<dbReference type="RefSeq" id="NP_001121090.1">
    <property type="nucleotide sequence ID" value="NM_001127618.2"/>
</dbReference>
<dbReference type="RefSeq" id="XP_007659874.1">
    <property type="nucleotide sequence ID" value="XM_007661684.2"/>
</dbReference>
<dbReference type="SMR" id="Q864T7"/>
<dbReference type="FunCoup" id="Q864T7">
    <property type="interactions" value="485"/>
</dbReference>
<dbReference type="STRING" id="9258.ENSOANP00000002450"/>
<dbReference type="Ensembl" id="ENSOANT00000002451.3">
    <property type="protein sequence ID" value="ENSOANP00000002450.3"/>
    <property type="gene ID" value="ENSOANG00000001539.3"/>
</dbReference>
<dbReference type="GeneID" id="791104"/>
<dbReference type="KEGG" id="oaa:791104"/>
<dbReference type="CTD" id="567"/>
<dbReference type="eggNOG" id="ENOG502S8GM">
    <property type="taxonomic scope" value="Eukaryota"/>
</dbReference>
<dbReference type="InParanoid" id="Q864T7"/>
<dbReference type="OrthoDB" id="9949628at2759"/>
<dbReference type="Proteomes" id="UP000002279">
    <property type="component" value="Unplaced"/>
</dbReference>
<dbReference type="Bgee" id="ENSOANG00000001539">
    <property type="expression patterns" value="Expressed in ovary and 7 other cell types or tissues"/>
</dbReference>
<dbReference type="GO" id="GO:0005576">
    <property type="term" value="C:extracellular region"/>
    <property type="evidence" value="ECO:0007669"/>
    <property type="project" value="UniProtKB-SubCell"/>
</dbReference>
<dbReference type="GO" id="GO:0031902">
    <property type="term" value="C:late endosome membrane"/>
    <property type="evidence" value="ECO:0000318"/>
    <property type="project" value="GO_Central"/>
</dbReference>
<dbReference type="GO" id="GO:0005765">
    <property type="term" value="C:lysosomal membrane"/>
    <property type="evidence" value="ECO:0000318"/>
    <property type="project" value="GO_Central"/>
</dbReference>
<dbReference type="GO" id="GO:0042612">
    <property type="term" value="C:MHC class I protein complex"/>
    <property type="evidence" value="ECO:0007669"/>
    <property type="project" value="UniProtKB-KW"/>
</dbReference>
<dbReference type="GO" id="GO:0042613">
    <property type="term" value="C:MHC class II protein complex"/>
    <property type="evidence" value="ECO:0000318"/>
    <property type="project" value="GO_Central"/>
</dbReference>
<dbReference type="GO" id="GO:0023026">
    <property type="term" value="F:MHC class II protein complex binding"/>
    <property type="evidence" value="ECO:0000318"/>
    <property type="project" value="GO_Central"/>
</dbReference>
<dbReference type="GO" id="GO:0042605">
    <property type="term" value="F:peptide antigen binding"/>
    <property type="evidence" value="ECO:0000318"/>
    <property type="project" value="GO_Central"/>
</dbReference>
<dbReference type="GO" id="GO:0019886">
    <property type="term" value="P:antigen processing and presentation of exogenous peptide antigen via MHC class II"/>
    <property type="evidence" value="ECO:0000318"/>
    <property type="project" value="GO_Central"/>
</dbReference>
<dbReference type="GO" id="GO:0002474">
    <property type="term" value="P:antigen processing and presentation of peptide antigen via MHC class I"/>
    <property type="evidence" value="ECO:0007669"/>
    <property type="project" value="UniProtKB-KW"/>
</dbReference>
<dbReference type="GO" id="GO:0002503">
    <property type="term" value="P:peptide antigen assembly with MHC class II protein complex"/>
    <property type="evidence" value="ECO:0000318"/>
    <property type="project" value="GO_Central"/>
</dbReference>
<dbReference type="GO" id="GO:0050778">
    <property type="term" value="P:positive regulation of immune response"/>
    <property type="evidence" value="ECO:0000318"/>
    <property type="project" value="GO_Central"/>
</dbReference>
<dbReference type="GO" id="GO:0050870">
    <property type="term" value="P:positive regulation of T cell activation"/>
    <property type="evidence" value="ECO:0000318"/>
    <property type="project" value="GO_Central"/>
</dbReference>
<dbReference type="FunFam" id="2.60.40.10:FF:001005">
    <property type="entry name" value="Beta-2-microglobulin"/>
    <property type="match status" value="1"/>
</dbReference>
<dbReference type="Gene3D" id="2.60.40.10">
    <property type="entry name" value="Immunoglobulins"/>
    <property type="match status" value="1"/>
</dbReference>
<dbReference type="InterPro" id="IPR007110">
    <property type="entry name" value="Ig-like_dom"/>
</dbReference>
<dbReference type="InterPro" id="IPR036179">
    <property type="entry name" value="Ig-like_dom_sf"/>
</dbReference>
<dbReference type="InterPro" id="IPR013783">
    <property type="entry name" value="Ig-like_fold"/>
</dbReference>
<dbReference type="InterPro" id="IPR003006">
    <property type="entry name" value="Ig/MHC_CS"/>
</dbReference>
<dbReference type="InterPro" id="IPR003597">
    <property type="entry name" value="Ig_C1-set"/>
</dbReference>
<dbReference type="InterPro" id="IPR050160">
    <property type="entry name" value="MHC/Immunoglobulin"/>
</dbReference>
<dbReference type="PANTHER" id="PTHR19944:SF62">
    <property type="entry name" value="BETA-2-MICROGLOBULIN"/>
    <property type="match status" value="1"/>
</dbReference>
<dbReference type="PANTHER" id="PTHR19944">
    <property type="entry name" value="MHC CLASS II-RELATED"/>
    <property type="match status" value="1"/>
</dbReference>
<dbReference type="Pfam" id="PF07654">
    <property type="entry name" value="C1-set"/>
    <property type="match status" value="1"/>
</dbReference>
<dbReference type="SMART" id="SM00407">
    <property type="entry name" value="IGc1"/>
    <property type="match status" value="1"/>
</dbReference>
<dbReference type="SUPFAM" id="SSF48726">
    <property type="entry name" value="Immunoglobulin"/>
    <property type="match status" value="1"/>
</dbReference>
<dbReference type="PROSITE" id="PS50835">
    <property type="entry name" value="IG_LIKE"/>
    <property type="match status" value="1"/>
</dbReference>
<dbReference type="PROSITE" id="PS00290">
    <property type="entry name" value="IG_MHC"/>
    <property type="match status" value="1"/>
</dbReference>
<evidence type="ECO:0000250" key="1"/>
<evidence type="ECO:0000255" key="2"/>
<evidence type="ECO:0000255" key="3">
    <source>
        <dbReference type="PROSITE-ProRule" id="PRU00114"/>
    </source>
</evidence>
<evidence type="ECO:0000305" key="4"/>
<protein>
    <recommendedName>
        <fullName>Beta-2-microglobulin</fullName>
    </recommendedName>
</protein>
<sequence length="118" mass="13329">MGSRWGIAVLGLFCFVSCLEAITSSPKIQVYSRHPAQIGESNNLNCYVSSFHPPQISIRLLKNGQEMPGVEMSDLSFSNDWTFHRLVHTVFTPSNQDTFECEVVHEGVKKTVKWEPDN</sequence>
<reference key="1">
    <citation type="journal article" date="2003" name="Dev. Comp. Immunol.">
        <title>Characterization of beta(2)-microglobulin coding sequence from three non-placental mammals: the duckbill platypus, the short-beaked echidna, and the grey short-tailed opossum.</title>
        <authorList>
            <person name="Miska K.B."/>
            <person name="Hellman L."/>
            <person name="Miller R.D."/>
        </authorList>
    </citation>
    <scope>NUCLEOTIDE SEQUENCE [MRNA]</scope>
</reference>
<feature type="signal peptide" evidence="2">
    <location>
        <begin position="1"/>
        <end position="21"/>
    </location>
</feature>
<feature type="chain" id="PRO_0000041827" description="Beta-2-microglobulin">
    <location>
        <begin position="22"/>
        <end position="118"/>
    </location>
</feature>
<feature type="domain" description="Ig-like C1-type">
    <location>
        <begin position="26"/>
        <end position="113"/>
    </location>
</feature>
<feature type="disulfide bond" evidence="3">
    <location>
        <begin position="46"/>
        <end position="101"/>
    </location>
</feature>
<accession>Q864T7</accession>
<gene>
    <name type="primary">B2M</name>
</gene>
<keyword id="KW-1015">Disulfide bond</keyword>
<keyword id="KW-0391">Immunity</keyword>
<keyword id="KW-0393">Immunoglobulin domain</keyword>
<keyword id="KW-0490">MHC I</keyword>
<keyword id="KW-1185">Reference proteome</keyword>
<keyword id="KW-0964">Secreted</keyword>
<keyword id="KW-0732">Signal</keyword>